<dbReference type="EC" id="2.7.11.1" evidence="1"/>
<dbReference type="EMBL" id="AE017355">
    <property type="protein sequence ID" value="AAT62389.1"/>
    <property type="molecule type" value="Genomic_DNA"/>
</dbReference>
<dbReference type="RefSeq" id="WP_000970573.1">
    <property type="nucleotide sequence ID" value="NC_005957.1"/>
</dbReference>
<dbReference type="RefSeq" id="YP_035251.1">
    <property type="nucleotide sequence ID" value="NC_005957.1"/>
</dbReference>
<dbReference type="SMR" id="Q6HMH0"/>
<dbReference type="GeneID" id="93010020"/>
<dbReference type="KEGG" id="btk:BT9727_0912"/>
<dbReference type="PATRIC" id="fig|281309.8.peg.960"/>
<dbReference type="HOGENOM" id="CLU_090336_11_1_9"/>
<dbReference type="Proteomes" id="UP000001301">
    <property type="component" value="Chromosome"/>
</dbReference>
<dbReference type="GO" id="GO:0005524">
    <property type="term" value="F:ATP binding"/>
    <property type="evidence" value="ECO:0007669"/>
    <property type="project" value="UniProtKB-KW"/>
</dbReference>
<dbReference type="GO" id="GO:0106310">
    <property type="term" value="F:protein serine kinase activity"/>
    <property type="evidence" value="ECO:0007669"/>
    <property type="project" value="RHEA"/>
</dbReference>
<dbReference type="GO" id="GO:0004674">
    <property type="term" value="F:protein serine/threonine kinase activity"/>
    <property type="evidence" value="ECO:0007669"/>
    <property type="project" value="UniProtKB-KW"/>
</dbReference>
<dbReference type="GO" id="GO:0016989">
    <property type="term" value="F:sigma factor antagonist activity"/>
    <property type="evidence" value="ECO:0007669"/>
    <property type="project" value="InterPro"/>
</dbReference>
<dbReference type="CDD" id="cd16936">
    <property type="entry name" value="HATPase_RsbW-like"/>
    <property type="match status" value="1"/>
</dbReference>
<dbReference type="FunFam" id="3.30.565.10:FF:000026">
    <property type="entry name" value="Serine-protein kinase RsbW"/>
    <property type="match status" value="1"/>
</dbReference>
<dbReference type="Gene3D" id="3.30.565.10">
    <property type="entry name" value="Histidine kinase-like ATPase, C-terminal domain"/>
    <property type="match status" value="1"/>
</dbReference>
<dbReference type="HAMAP" id="MF_00638">
    <property type="entry name" value="Anti_sigma_B"/>
    <property type="match status" value="1"/>
</dbReference>
<dbReference type="InterPro" id="IPR050267">
    <property type="entry name" value="Anti-sigma-factor_SerPK"/>
</dbReference>
<dbReference type="InterPro" id="IPR036890">
    <property type="entry name" value="HATPase_C_sf"/>
</dbReference>
<dbReference type="InterPro" id="IPR010193">
    <property type="entry name" value="RsbW"/>
</dbReference>
<dbReference type="NCBIfam" id="NF003144">
    <property type="entry name" value="PRK04069.1"/>
    <property type="match status" value="1"/>
</dbReference>
<dbReference type="NCBIfam" id="TIGR01924">
    <property type="entry name" value="rsbW_low_gc"/>
    <property type="match status" value="1"/>
</dbReference>
<dbReference type="PANTHER" id="PTHR35526">
    <property type="entry name" value="ANTI-SIGMA-F FACTOR RSBW-RELATED"/>
    <property type="match status" value="1"/>
</dbReference>
<dbReference type="PANTHER" id="PTHR35526:SF9">
    <property type="entry name" value="SERINE-PROTEIN KINASE RSBW"/>
    <property type="match status" value="1"/>
</dbReference>
<dbReference type="Pfam" id="PF13581">
    <property type="entry name" value="HATPase_c_2"/>
    <property type="match status" value="1"/>
</dbReference>
<dbReference type="SUPFAM" id="SSF55874">
    <property type="entry name" value="ATPase domain of HSP90 chaperone/DNA topoisomerase II/histidine kinase"/>
    <property type="match status" value="1"/>
</dbReference>
<gene>
    <name evidence="1" type="primary">rsbW</name>
    <name type="ordered locus">BT9727_0912</name>
</gene>
<comment type="function">
    <text evidence="1">Negative regulator of sigma-B activity. Phosphorylates and inactivates its specific antagonist protein, RsbV. Upon phosphorylation of RsbV, RsbW is released and binds to sigma-B, thereby blocking its ability to form an RNA polymerase holoenzyme (E-sigma-B).</text>
</comment>
<comment type="catalytic activity">
    <reaction evidence="1">
        <text>L-seryl-[protein] + ATP = O-phospho-L-seryl-[protein] + ADP + H(+)</text>
        <dbReference type="Rhea" id="RHEA:17989"/>
        <dbReference type="Rhea" id="RHEA-COMP:9863"/>
        <dbReference type="Rhea" id="RHEA-COMP:11604"/>
        <dbReference type="ChEBI" id="CHEBI:15378"/>
        <dbReference type="ChEBI" id="CHEBI:29999"/>
        <dbReference type="ChEBI" id="CHEBI:30616"/>
        <dbReference type="ChEBI" id="CHEBI:83421"/>
        <dbReference type="ChEBI" id="CHEBI:456216"/>
        <dbReference type="EC" id="2.7.11.1"/>
    </reaction>
</comment>
<comment type="catalytic activity">
    <reaction evidence="1">
        <text>L-threonyl-[protein] + ATP = O-phospho-L-threonyl-[protein] + ADP + H(+)</text>
        <dbReference type="Rhea" id="RHEA:46608"/>
        <dbReference type="Rhea" id="RHEA-COMP:11060"/>
        <dbReference type="Rhea" id="RHEA-COMP:11605"/>
        <dbReference type="ChEBI" id="CHEBI:15378"/>
        <dbReference type="ChEBI" id="CHEBI:30013"/>
        <dbReference type="ChEBI" id="CHEBI:30616"/>
        <dbReference type="ChEBI" id="CHEBI:61977"/>
        <dbReference type="ChEBI" id="CHEBI:456216"/>
        <dbReference type="EC" id="2.7.11.1"/>
    </reaction>
</comment>
<comment type="similarity">
    <text evidence="1">Belongs to the anti-sigma-factor family.</text>
</comment>
<proteinExistence type="inferred from homology"/>
<organism>
    <name type="scientific">Bacillus thuringiensis subsp. konkukian (strain 97-27)</name>
    <dbReference type="NCBI Taxonomy" id="281309"/>
    <lineage>
        <taxon>Bacteria</taxon>
        <taxon>Bacillati</taxon>
        <taxon>Bacillota</taxon>
        <taxon>Bacilli</taxon>
        <taxon>Bacillales</taxon>
        <taxon>Bacillaceae</taxon>
        <taxon>Bacillus</taxon>
        <taxon>Bacillus cereus group</taxon>
    </lineage>
</organism>
<keyword id="KW-0067">ATP-binding</keyword>
<keyword id="KW-0418">Kinase</keyword>
<keyword id="KW-0547">Nucleotide-binding</keyword>
<keyword id="KW-0723">Serine/threonine-protein kinase</keyword>
<keyword id="KW-0808">Transferase</keyword>
<reference key="1">
    <citation type="journal article" date="2006" name="J. Bacteriol.">
        <title>Pathogenomic sequence analysis of Bacillus cereus and Bacillus thuringiensis isolates closely related to Bacillus anthracis.</title>
        <authorList>
            <person name="Han C.S."/>
            <person name="Xie G."/>
            <person name="Challacombe J.F."/>
            <person name="Altherr M.R."/>
            <person name="Bhotika S.S."/>
            <person name="Bruce D."/>
            <person name="Campbell C.S."/>
            <person name="Campbell M.L."/>
            <person name="Chen J."/>
            <person name="Chertkov O."/>
            <person name="Cleland C."/>
            <person name="Dimitrijevic M."/>
            <person name="Doggett N.A."/>
            <person name="Fawcett J.J."/>
            <person name="Glavina T."/>
            <person name="Goodwin L.A."/>
            <person name="Hill K.K."/>
            <person name="Hitchcock P."/>
            <person name="Jackson P.J."/>
            <person name="Keim P."/>
            <person name="Kewalramani A.R."/>
            <person name="Longmire J."/>
            <person name="Lucas S."/>
            <person name="Malfatti S."/>
            <person name="McMurry K."/>
            <person name="Meincke L.J."/>
            <person name="Misra M."/>
            <person name="Moseman B.L."/>
            <person name="Mundt M."/>
            <person name="Munk A.C."/>
            <person name="Okinaka R.T."/>
            <person name="Parson-Quintana B."/>
            <person name="Reilly L.P."/>
            <person name="Richardson P."/>
            <person name="Robinson D.L."/>
            <person name="Rubin E."/>
            <person name="Saunders E."/>
            <person name="Tapia R."/>
            <person name="Tesmer J.G."/>
            <person name="Thayer N."/>
            <person name="Thompson L.S."/>
            <person name="Tice H."/>
            <person name="Ticknor L.O."/>
            <person name="Wills P.L."/>
            <person name="Brettin T.S."/>
            <person name="Gilna P."/>
        </authorList>
    </citation>
    <scope>NUCLEOTIDE SEQUENCE [LARGE SCALE GENOMIC DNA]</scope>
    <source>
        <strain>97-27</strain>
    </source>
</reference>
<sequence length="160" mass="18283">MMERFEKIEMKIPAKAEYVAIIRLTMAGVANRMGFAYDDIEDMKIAISEACTNIVQHAYKEDVGEIAIVFGLYEDRLEIMVADNGVSFDFNNLKRKVGPYDISKPVEHLPENGLGLYLINTLMDDIQIMHDEGMTVLMTKYIQREQVENDGNPISTYESY</sequence>
<evidence type="ECO:0000255" key="1">
    <source>
        <dbReference type="HAMAP-Rule" id="MF_00638"/>
    </source>
</evidence>
<name>RSBW_BACHK</name>
<protein>
    <recommendedName>
        <fullName evidence="1">Serine-protein kinase RsbW</fullName>
        <ecNumber evidence="1">2.7.11.1</ecNumber>
    </recommendedName>
    <alternativeName>
        <fullName evidence="1">Anti-sigma-B factor</fullName>
    </alternativeName>
    <alternativeName>
        <fullName evidence="1">Sigma-B negative effector RsbW</fullName>
    </alternativeName>
</protein>
<accession>Q6HMH0</accession>
<feature type="chain" id="PRO_0000203533" description="Serine-protein kinase RsbW">
    <location>
        <begin position="1"/>
        <end position="160"/>
    </location>
</feature>